<proteinExistence type="inferred from homology"/>
<comment type="function">
    <text evidence="1">RNA polymerase that catalyzes the synthesis of short RNA molecules used as primers for DNA polymerase during DNA replication.</text>
</comment>
<comment type="catalytic activity">
    <reaction evidence="1">
        <text>ssDNA + n NTP = ssDNA/pppN(pN)n-1 hybrid + (n-1) diphosphate.</text>
        <dbReference type="EC" id="2.7.7.101"/>
    </reaction>
</comment>
<comment type="cofactor">
    <cofactor evidence="1">
        <name>Zn(2+)</name>
        <dbReference type="ChEBI" id="CHEBI:29105"/>
    </cofactor>
    <text evidence="1">Binds 1 zinc ion per monomer.</text>
</comment>
<comment type="cofactor">
    <cofactor evidence="1">
        <name>Mg(2+)</name>
        <dbReference type="ChEBI" id="CHEBI:18420"/>
    </cofactor>
    <text evidence="1">Binds two Mg(2+) per subunit.</text>
</comment>
<comment type="subunit">
    <text evidence="1">Monomer. Interacts with DnaB.</text>
</comment>
<comment type="domain">
    <text evidence="1">Contains an N-terminal zinc-binding domain, a central core domain that contains the primase activity, and a C-terminal DnaB-binding domain.</text>
</comment>
<comment type="similarity">
    <text evidence="1">Belongs to the DnaG primase family.</text>
</comment>
<name>DNAG_RICBR</name>
<gene>
    <name evidence="1" type="primary">dnaG</name>
    <name type="ordered locus">RBE_0055</name>
</gene>
<feature type="chain" id="PRO_0000280941" description="DNA primase">
    <location>
        <begin position="1"/>
        <end position="599"/>
    </location>
</feature>
<feature type="domain" description="Toprim" evidence="1">
    <location>
        <begin position="250"/>
        <end position="332"/>
    </location>
</feature>
<feature type="zinc finger region" description="CHC2-type" evidence="1">
    <location>
        <begin position="38"/>
        <end position="62"/>
    </location>
</feature>
<feature type="binding site" evidence="1">
    <location>
        <position position="256"/>
    </location>
    <ligand>
        <name>Mg(2+)</name>
        <dbReference type="ChEBI" id="CHEBI:18420"/>
        <label>1</label>
        <note>catalytic</note>
    </ligand>
</feature>
<feature type="binding site" evidence="1">
    <location>
        <position position="300"/>
    </location>
    <ligand>
        <name>Mg(2+)</name>
        <dbReference type="ChEBI" id="CHEBI:18420"/>
        <label>1</label>
        <note>catalytic</note>
    </ligand>
</feature>
<feature type="binding site" evidence="1">
    <location>
        <position position="300"/>
    </location>
    <ligand>
        <name>Mg(2+)</name>
        <dbReference type="ChEBI" id="CHEBI:18420"/>
        <label>2</label>
    </ligand>
</feature>
<feature type="binding site" evidence="1">
    <location>
        <position position="302"/>
    </location>
    <ligand>
        <name>Mg(2+)</name>
        <dbReference type="ChEBI" id="CHEBI:18420"/>
        <label>2</label>
    </ligand>
</feature>
<accession>Q1RKH8</accession>
<keyword id="KW-0235">DNA replication</keyword>
<keyword id="KW-0238">DNA-binding</keyword>
<keyword id="KW-0240">DNA-directed RNA polymerase</keyword>
<keyword id="KW-0460">Magnesium</keyword>
<keyword id="KW-0479">Metal-binding</keyword>
<keyword id="KW-0548">Nucleotidyltransferase</keyword>
<keyword id="KW-0639">Primosome</keyword>
<keyword id="KW-0804">Transcription</keyword>
<keyword id="KW-0808">Transferase</keyword>
<keyword id="KW-0862">Zinc</keyword>
<keyword id="KW-0863">Zinc-finger</keyword>
<evidence type="ECO:0000255" key="1">
    <source>
        <dbReference type="HAMAP-Rule" id="MF_00974"/>
    </source>
</evidence>
<sequence>MKLAPEFYEVLRNRINISDVVRQKVVLTRKSGNYVGLCPFHQEKTPSFTVSDSKRFFYCFGCKAAGDVIKFTSNISGLSYNDSAIKLATDYGVEIPKLTQKQKEFYEESDEILNILELANKFFKSQLTPEILNYLNERNITNETIKEFSIGFAPRGNKFEKFFHDKNITNVQLGKAGLIGKREDGEIYSLFSNRITIPIRNIYNKIVGFGGRVIGQGLPKYLNSPETVVFQKSETLYGEHKAISSSYKKNYSILVEGYFDVISLHQAGFSEVVASLGTSVTENHLHKLWRAGDEIILCLDGDSAGIKASVRTINLALPLINSEKKISFIRLPTGLDPDDAVNKNGVDFFTKLIDTRISLSEMIWQIEYAGKNFKTAEDKANLEKNLKDYCSKISDSNLRASYYRFFKDQIWQNLVTKQQKTVAKNVNLLPLSSGYSELEILEHAFCALLIKFPQILQEFEIKEFILNLNFSNKLLEEFRNWYLSEVIDNAVEAGEIAAIVEKTSFFDIFLLLSEADNLFLDIAFNKDNVRLDLLWQWLYKRYYLLNLQQEYAHITKEYVITNIDDYEKVLFYKKEILKIASELQDLNESFINHIIDNSK</sequence>
<dbReference type="EC" id="2.7.7.101" evidence="1"/>
<dbReference type="EMBL" id="CP000087">
    <property type="protein sequence ID" value="ABE04136.1"/>
    <property type="molecule type" value="Genomic_DNA"/>
</dbReference>
<dbReference type="RefSeq" id="WP_011476751.1">
    <property type="nucleotide sequence ID" value="NC_007940.1"/>
</dbReference>
<dbReference type="SMR" id="Q1RKH8"/>
<dbReference type="KEGG" id="rbe:RBE_0055"/>
<dbReference type="eggNOG" id="COG0358">
    <property type="taxonomic scope" value="Bacteria"/>
</dbReference>
<dbReference type="HOGENOM" id="CLU_013501_3_2_5"/>
<dbReference type="OrthoDB" id="9803773at2"/>
<dbReference type="Proteomes" id="UP000001951">
    <property type="component" value="Chromosome"/>
</dbReference>
<dbReference type="GO" id="GO:0005737">
    <property type="term" value="C:cytoplasm"/>
    <property type="evidence" value="ECO:0007669"/>
    <property type="project" value="TreeGrafter"/>
</dbReference>
<dbReference type="GO" id="GO:0000428">
    <property type="term" value="C:DNA-directed RNA polymerase complex"/>
    <property type="evidence" value="ECO:0007669"/>
    <property type="project" value="UniProtKB-KW"/>
</dbReference>
<dbReference type="GO" id="GO:1990077">
    <property type="term" value="C:primosome complex"/>
    <property type="evidence" value="ECO:0007669"/>
    <property type="project" value="UniProtKB-KW"/>
</dbReference>
<dbReference type="GO" id="GO:0003677">
    <property type="term" value="F:DNA binding"/>
    <property type="evidence" value="ECO:0007669"/>
    <property type="project" value="UniProtKB-KW"/>
</dbReference>
<dbReference type="GO" id="GO:0003899">
    <property type="term" value="F:DNA-directed RNA polymerase activity"/>
    <property type="evidence" value="ECO:0007669"/>
    <property type="project" value="InterPro"/>
</dbReference>
<dbReference type="GO" id="GO:0008270">
    <property type="term" value="F:zinc ion binding"/>
    <property type="evidence" value="ECO:0007669"/>
    <property type="project" value="UniProtKB-UniRule"/>
</dbReference>
<dbReference type="GO" id="GO:0006269">
    <property type="term" value="P:DNA replication, synthesis of primer"/>
    <property type="evidence" value="ECO:0007669"/>
    <property type="project" value="UniProtKB-UniRule"/>
</dbReference>
<dbReference type="CDD" id="cd03364">
    <property type="entry name" value="TOPRIM_DnaG_primases"/>
    <property type="match status" value="1"/>
</dbReference>
<dbReference type="FunFam" id="3.40.1360.10:FF:000002">
    <property type="entry name" value="DNA primase"/>
    <property type="match status" value="1"/>
</dbReference>
<dbReference type="FunFam" id="3.90.580.10:FF:000001">
    <property type="entry name" value="DNA primase"/>
    <property type="match status" value="1"/>
</dbReference>
<dbReference type="Gene3D" id="3.40.1360.10">
    <property type="match status" value="1"/>
</dbReference>
<dbReference type="Gene3D" id="3.90.980.10">
    <property type="entry name" value="DNA primase, catalytic core, N-terminal domain"/>
    <property type="match status" value="1"/>
</dbReference>
<dbReference type="Gene3D" id="3.90.580.10">
    <property type="entry name" value="Zinc finger, CHC2-type domain"/>
    <property type="match status" value="1"/>
</dbReference>
<dbReference type="HAMAP" id="MF_00974">
    <property type="entry name" value="DNA_primase_DnaG"/>
    <property type="match status" value="1"/>
</dbReference>
<dbReference type="InterPro" id="IPR037068">
    <property type="entry name" value="DNA_primase_core_N_sf"/>
</dbReference>
<dbReference type="InterPro" id="IPR006295">
    <property type="entry name" value="DNA_primase_DnaG"/>
</dbReference>
<dbReference type="InterPro" id="IPR036977">
    <property type="entry name" value="DNA_primase_Znf_CHC2"/>
</dbReference>
<dbReference type="InterPro" id="IPR030846">
    <property type="entry name" value="DnaG_bac"/>
</dbReference>
<dbReference type="InterPro" id="IPR013264">
    <property type="entry name" value="DNAG_N"/>
</dbReference>
<dbReference type="InterPro" id="IPR050219">
    <property type="entry name" value="DnaG_primase"/>
</dbReference>
<dbReference type="InterPro" id="IPR034151">
    <property type="entry name" value="TOPRIM_DnaG_bac"/>
</dbReference>
<dbReference type="InterPro" id="IPR006171">
    <property type="entry name" value="TOPRIM_dom"/>
</dbReference>
<dbReference type="InterPro" id="IPR002694">
    <property type="entry name" value="Znf_CHC2"/>
</dbReference>
<dbReference type="NCBIfam" id="TIGR01391">
    <property type="entry name" value="dnaG"/>
    <property type="match status" value="1"/>
</dbReference>
<dbReference type="PANTHER" id="PTHR30313">
    <property type="entry name" value="DNA PRIMASE"/>
    <property type="match status" value="1"/>
</dbReference>
<dbReference type="PANTHER" id="PTHR30313:SF2">
    <property type="entry name" value="DNA PRIMASE"/>
    <property type="match status" value="1"/>
</dbReference>
<dbReference type="Pfam" id="PF08275">
    <property type="entry name" value="DNAG_N"/>
    <property type="match status" value="1"/>
</dbReference>
<dbReference type="Pfam" id="PF13155">
    <property type="entry name" value="Toprim_2"/>
    <property type="match status" value="1"/>
</dbReference>
<dbReference type="Pfam" id="PF01807">
    <property type="entry name" value="Zn_ribbon_DnaG"/>
    <property type="match status" value="1"/>
</dbReference>
<dbReference type="PIRSF" id="PIRSF002811">
    <property type="entry name" value="DnaG"/>
    <property type="match status" value="1"/>
</dbReference>
<dbReference type="SMART" id="SM00493">
    <property type="entry name" value="TOPRIM"/>
    <property type="match status" value="1"/>
</dbReference>
<dbReference type="SMART" id="SM00400">
    <property type="entry name" value="ZnF_CHCC"/>
    <property type="match status" value="1"/>
</dbReference>
<dbReference type="SUPFAM" id="SSF56731">
    <property type="entry name" value="DNA primase core"/>
    <property type="match status" value="1"/>
</dbReference>
<dbReference type="SUPFAM" id="SSF57783">
    <property type="entry name" value="Zinc beta-ribbon"/>
    <property type="match status" value="1"/>
</dbReference>
<dbReference type="PROSITE" id="PS50880">
    <property type="entry name" value="TOPRIM"/>
    <property type="match status" value="1"/>
</dbReference>
<organism>
    <name type="scientific">Rickettsia bellii (strain RML369-C)</name>
    <dbReference type="NCBI Taxonomy" id="336407"/>
    <lineage>
        <taxon>Bacteria</taxon>
        <taxon>Pseudomonadati</taxon>
        <taxon>Pseudomonadota</taxon>
        <taxon>Alphaproteobacteria</taxon>
        <taxon>Rickettsiales</taxon>
        <taxon>Rickettsiaceae</taxon>
        <taxon>Rickettsieae</taxon>
        <taxon>Rickettsia</taxon>
        <taxon>belli group</taxon>
    </lineage>
</organism>
<reference key="1">
    <citation type="journal article" date="2006" name="PLoS Genet.">
        <title>Genome sequence of Rickettsia bellii illuminates the role of amoebae in gene exchanges between intracellular pathogens.</title>
        <authorList>
            <person name="Ogata H."/>
            <person name="La Scola B."/>
            <person name="Audic S."/>
            <person name="Renesto P."/>
            <person name="Blanc G."/>
            <person name="Robert C."/>
            <person name="Fournier P.-E."/>
            <person name="Claverie J.-M."/>
            <person name="Raoult D."/>
        </authorList>
    </citation>
    <scope>NUCLEOTIDE SEQUENCE [LARGE SCALE GENOMIC DNA]</scope>
    <source>
        <strain>RML369-C</strain>
    </source>
</reference>
<protein>
    <recommendedName>
        <fullName evidence="1">DNA primase</fullName>
        <ecNumber evidence="1">2.7.7.101</ecNumber>
    </recommendedName>
</protein>